<comment type="function">
    <text evidence="1">Activates KDO (a required 8-carbon sugar) for incorporation into bacterial lipopolysaccharide in Gram-negative bacteria.</text>
</comment>
<comment type="catalytic activity">
    <reaction evidence="1">
        <text>3-deoxy-alpha-D-manno-oct-2-ulosonate + CTP = CMP-3-deoxy-beta-D-manno-octulosonate + diphosphate</text>
        <dbReference type="Rhea" id="RHEA:23448"/>
        <dbReference type="ChEBI" id="CHEBI:33019"/>
        <dbReference type="ChEBI" id="CHEBI:37563"/>
        <dbReference type="ChEBI" id="CHEBI:85986"/>
        <dbReference type="ChEBI" id="CHEBI:85987"/>
        <dbReference type="EC" id="2.7.7.38"/>
    </reaction>
</comment>
<comment type="pathway">
    <text evidence="1">Nucleotide-sugar biosynthesis; CMP-3-deoxy-D-manno-octulosonate biosynthesis; CMP-3-deoxy-D-manno-octulosonate from 3-deoxy-D-manno-octulosonate and CTP: step 1/1.</text>
</comment>
<comment type="pathway">
    <text evidence="1">Bacterial outer membrane biogenesis; lipopolysaccharide biosynthesis.</text>
</comment>
<comment type="subcellular location">
    <subcellularLocation>
        <location evidence="1">Cytoplasm</location>
    </subcellularLocation>
</comment>
<comment type="similarity">
    <text evidence="1">Belongs to the KdsB family.</text>
</comment>
<dbReference type="EC" id="2.7.7.38" evidence="1"/>
<dbReference type="EMBL" id="CP000241">
    <property type="protein sequence ID" value="ABF84300.1"/>
    <property type="molecule type" value="Genomic_DNA"/>
</dbReference>
<dbReference type="RefSeq" id="WP_000584048.1">
    <property type="nucleotide sequence ID" value="NC_008086.1"/>
</dbReference>
<dbReference type="SMR" id="Q1CUS2"/>
<dbReference type="KEGG" id="hpa:HPAG1_0233"/>
<dbReference type="HOGENOM" id="CLU_065038_0_1_7"/>
<dbReference type="UniPathway" id="UPA00030"/>
<dbReference type="UniPathway" id="UPA00358">
    <property type="reaction ID" value="UER00476"/>
</dbReference>
<dbReference type="GO" id="GO:0005829">
    <property type="term" value="C:cytosol"/>
    <property type="evidence" value="ECO:0007669"/>
    <property type="project" value="TreeGrafter"/>
</dbReference>
<dbReference type="GO" id="GO:0008690">
    <property type="term" value="F:3-deoxy-manno-octulosonate cytidylyltransferase activity"/>
    <property type="evidence" value="ECO:0007669"/>
    <property type="project" value="UniProtKB-UniRule"/>
</dbReference>
<dbReference type="GO" id="GO:0033468">
    <property type="term" value="P:CMP-keto-3-deoxy-D-manno-octulosonic acid biosynthetic process"/>
    <property type="evidence" value="ECO:0007669"/>
    <property type="project" value="UniProtKB-UniRule"/>
</dbReference>
<dbReference type="GO" id="GO:0009103">
    <property type="term" value="P:lipopolysaccharide biosynthetic process"/>
    <property type="evidence" value="ECO:0007669"/>
    <property type="project" value="UniProtKB-UniRule"/>
</dbReference>
<dbReference type="CDD" id="cd02517">
    <property type="entry name" value="CMP-KDO-Synthetase"/>
    <property type="match status" value="1"/>
</dbReference>
<dbReference type="FunFam" id="3.90.550.10:FF:000222">
    <property type="entry name" value="3-deoxy-manno-octulosonate cytidylyltransferase"/>
    <property type="match status" value="1"/>
</dbReference>
<dbReference type="Gene3D" id="3.90.550.10">
    <property type="entry name" value="Spore Coat Polysaccharide Biosynthesis Protein SpsA, Chain A"/>
    <property type="match status" value="1"/>
</dbReference>
<dbReference type="HAMAP" id="MF_00057">
    <property type="entry name" value="KdsB"/>
    <property type="match status" value="1"/>
</dbReference>
<dbReference type="InterPro" id="IPR003329">
    <property type="entry name" value="Cytidylyl_trans"/>
</dbReference>
<dbReference type="InterPro" id="IPR004528">
    <property type="entry name" value="KdsB"/>
</dbReference>
<dbReference type="InterPro" id="IPR029044">
    <property type="entry name" value="Nucleotide-diphossugar_trans"/>
</dbReference>
<dbReference type="NCBIfam" id="TIGR00466">
    <property type="entry name" value="kdsB"/>
    <property type="match status" value="1"/>
</dbReference>
<dbReference type="NCBIfam" id="NF003952">
    <property type="entry name" value="PRK05450.1-5"/>
    <property type="match status" value="1"/>
</dbReference>
<dbReference type="PANTHER" id="PTHR42866">
    <property type="entry name" value="3-DEOXY-MANNO-OCTULOSONATE CYTIDYLYLTRANSFERASE"/>
    <property type="match status" value="1"/>
</dbReference>
<dbReference type="PANTHER" id="PTHR42866:SF2">
    <property type="entry name" value="3-DEOXY-MANNO-OCTULOSONATE CYTIDYLYLTRANSFERASE, MITOCHONDRIAL"/>
    <property type="match status" value="1"/>
</dbReference>
<dbReference type="Pfam" id="PF02348">
    <property type="entry name" value="CTP_transf_3"/>
    <property type="match status" value="1"/>
</dbReference>
<dbReference type="SUPFAM" id="SSF53448">
    <property type="entry name" value="Nucleotide-diphospho-sugar transferases"/>
    <property type="match status" value="1"/>
</dbReference>
<sequence length="243" mass="27484">MIIIPARLKSSRFENKVLEDIFGLPMVVRCAKNANLVDECVVACDDESIMQTCQKFHIKAVLTSKHHNSGTERCLEAARILGLKNDERVLNLQGDEPFLEKEVILALLEATKNAPFMATCAKVIDEEQAKSPNLVKVVLDSQNNALYFSRSLIPFLRDFDAKRQTPLLGHIGIYGFHNKEILEELCTLKPCVLEDTEKLEQLRALYYQKKIAVKIVQSQSVGIDTQEDLENALKIFSPNLLER</sequence>
<evidence type="ECO:0000255" key="1">
    <source>
        <dbReference type="HAMAP-Rule" id="MF_00057"/>
    </source>
</evidence>
<gene>
    <name evidence="1" type="primary">kdsB</name>
    <name type="ordered locus">HPAG1_0233</name>
</gene>
<protein>
    <recommendedName>
        <fullName evidence="1">3-deoxy-manno-octulosonate cytidylyltransferase</fullName>
        <ecNumber evidence="1">2.7.7.38</ecNumber>
    </recommendedName>
    <alternativeName>
        <fullName evidence="1">CMP-2-keto-3-deoxyoctulosonic acid synthase</fullName>
        <shortName evidence="1">CKS</shortName>
        <shortName evidence="1">CMP-KDO synthase</shortName>
    </alternativeName>
</protein>
<proteinExistence type="inferred from homology"/>
<keyword id="KW-0963">Cytoplasm</keyword>
<keyword id="KW-0448">Lipopolysaccharide biosynthesis</keyword>
<keyword id="KW-0548">Nucleotidyltransferase</keyword>
<keyword id="KW-0808">Transferase</keyword>
<organism>
    <name type="scientific">Helicobacter pylori (strain HPAG1)</name>
    <dbReference type="NCBI Taxonomy" id="357544"/>
    <lineage>
        <taxon>Bacteria</taxon>
        <taxon>Pseudomonadati</taxon>
        <taxon>Campylobacterota</taxon>
        <taxon>Epsilonproteobacteria</taxon>
        <taxon>Campylobacterales</taxon>
        <taxon>Helicobacteraceae</taxon>
        <taxon>Helicobacter</taxon>
    </lineage>
</organism>
<reference key="1">
    <citation type="journal article" date="2006" name="Proc. Natl. Acad. Sci. U.S.A.">
        <title>The complete genome sequence of a chronic atrophic gastritis Helicobacter pylori strain: evolution during disease progression.</title>
        <authorList>
            <person name="Oh J.D."/>
            <person name="Kling-Baeckhed H."/>
            <person name="Giannakis M."/>
            <person name="Xu J."/>
            <person name="Fulton R.S."/>
            <person name="Fulton L.A."/>
            <person name="Cordum H.S."/>
            <person name="Wang C."/>
            <person name="Elliott G."/>
            <person name="Edwards J."/>
            <person name="Mardis E.R."/>
            <person name="Engstrand L.G."/>
            <person name="Gordon J.I."/>
        </authorList>
    </citation>
    <scope>NUCLEOTIDE SEQUENCE [LARGE SCALE GENOMIC DNA]</scope>
    <source>
        <strain>HPAG1</strain>
    </source>
</reference>
<feature type="chain" id="PRO_1000003365" description="3-deoxy-manno-octulosonate cytidylyltransferase">
    <location>
        <begin position="1"/>
        <end position="243"/>
    </location>
</feature>
<name>KDSB_HELPH</name>
<accession>Q1CUS2</accession>